<reference key="1">
    <citation type="journal article" date="2007" name="DNA Res.">
        <title>Complete genomic structure of the bloom-forming toxic cyanobacterium Microcystis aeruginosa NIES-843.</title>
        <authorList>
            <person name="Kaneko T."/>
            <person name="Nakajima N."/>
            <person name="Okamoto S."/>
            <person name="Suzuki I."/>
            <person name="Tanabe Y."/>
            <person name="Tamaoki M."/>
            <person name="Nakamura Y."/>
            <person name="Kasai F."/>
            <person name="Watanabe A."/>
            <person name="Kawashima K."/>
            <person name="Kishida Y."/>
            <person name="Ono A."/>
            <person name="Shimizu Y."/>
            <person name="Takahashi C."/>
            <person name="Minami C."/>
            <person name="Fujishiro T."/>
            <person name="Kohara M."/>
            <person name="Katoh M."/>
            <person name="Nakazaki N."/>
            <person name="Nakayama S."/>
            <person name="Yamada M."/>
            <person name="Tabata S."/>
            <person name="Watanabe M.M."/>
        </authorList>
    </citation>
    <scope>NUCLEOTIDE SEQUENCE [LARGE SCALE GENOMIC DNA]</scope>
    <source>
        <strain>NIES-843 / IAM M-247</strain>
    </source>
</reference>
<accession>B0JL91</accession>
<comment type="function">
    <text evidence="1">Catalyzes the condensation of (S)-aspartate-beta-semialdehyde [(S)-ASA] and pyruvate to 4-hydroxy-tetrahydrodipicolinate (HTPA).</text>
</comment>
<comment type="catalytic activity">
    <reaction evidence="1">
        <text>L-aspartate 4-semialdehyde + pyruvate = (2S,4S)-4-hydroxy-2,3,4,5-tetrahydrodipicolinate + H2O + H(+)</text>
        <dbReference type="Rhea" id="RHEA:34171"/>
        <dbReference type="ChEBI" id="CHEBI:15361"/>
        <dbReference type="ChEBI" id="CHEBI:15377"/>
        <dbReference type="ChEBI" id="CHEBI:15378"/>
        <dbReference type="ChEBI" id="CHEBI:67139"/>
        <dbReference type="ChEBI" id="CHEBI:537519"/>
        <dbReference type="EC" id="4.3.3.7"/>
    </reaction>
</comment>
<comment type="pathway">
    <text evidence="1">Amino-acid biosynthesis; L-lysine biosynthesis via DAP pathway; (S)-tetrahydrodipicolinate from L-aspartate: step 3/4.</text>
</comment>
<comment type="subunit">
    <text evidence="1">Homotetramer; dimer of dimers.</text>
</comment>
<comment type="subcellular location">
    <subcellularLocation>
        <location evidence="1">Cytoplasm</location>
    </subcellularLocation>
</comment>
<comment type="similarity">
    <text evidence="1">Belongs to the DapA family.</text>
</comment>
<comment type="caution">
    <text evidence="2">Was originally thought to be a dihydrodipicolinate synthase (DHDPS), catalyzing the condensation of (S)-aspartate-beta-semialdehyde [(S)-ASA] and pyruvate to dihydrodipicolinate (DHDP). However, it was shown in E.coli that the product of the enzymatic reaction is not dihydrodipicolinate but in fact (4S)-4-hydroxy-2,3,4,5-tetrahydro-(2S)-dipicolinic acid (HTPA), and that the consecutive dehydration reaction leading to DHDP is not spontaneous but catalyzed by DapB.</text>
</comment>
<name>DAPA_MICAN</name>
<proteinExistence type="inferred from homology"/>
<gene>
    <name evidence="1" type="primary">dapA</name>
    <name type="ordered locus">MAE_62680</name>
</gene>
<sequence length="297" mass="31786">MSETTYFGRVITAMVTPFTVEGQVNYALVEKLADYLVTHGSDGIVVCGTTGESPTLSWQEEYELFSIVKKAVNGRGKVIAGTGSNSTSEAIEATQQAAKLGLDGSLQVVPYYNKPPQEGLYEHFLTIAKACPDLPVMLYNIPGRTGQNMTPETIIKLAAVDNIVAVKEASGNLEQTCKIYCHTPENFAIYSGDDFLTLPLMTCGAVGVVSVASHLVGEEIQGMIQALLTGDAAKAIEINLKLFPLFKGLFCATNPIPIKAALNLVGWEVGGLRLPLCSLSPELEEGLAKIMQELALI</sequence>
<dbReference type="EC" id="4.3.3.7" evidence="1"/>
<dbReference type="EMBL" id="AP009552">
    <property type="protein sequence ID" value="BAG06090.1"/>
    <property type="molecule type" value="Genomic_DNA"/>
</dbReference>
<dbReference type="RefSeq" id="WP_012268367.1">
    <property type="nucleotide sequence ID" value="NC_010296.1"/>
</dbReference>
<dbReference type="SMR" id="B0JL91"/>
<dbReference type="STRING" id="449447.MAE_62680"/>
<dbReference type="PaxDb" id="449447-MAE_62680"/>
<dbReference type="EnsemblBacteria" id="BAG06090">
    <property type="protein sequence ID" value="BAG06090"/>
    <property type="gene ID" value="MAE_62680"/>
</dbReference>
<dbReference type="KEGG" id="mar:MAE_62680"/>
<dbReference type="PATRIC" id="fig|449447.4.peg.5743"/>
<dbReference type="eggNOG" id="COG0329">
    <property type="taxonomic scope" value="Bacteria"/>
</dbReference>
<dbReference type="HOGENOM" id="CLU_049343_7_1_3"/>
<dbReference type="BioCyc" id="MAER449447:MAE_RS27400-MONOMER"/>
<dbReference type="UniPathway" id="UPA00034">
    <property type="reaction ID" value="UER00017"/>
</dbReference>
<dbReference type="Proteomes" id="UP000001510">
    <property type="component" value="Chromosome"/>
</dbReference>
<dbReference type="GO" id="GO:0005829">
    <property type="term" value="C:cytosol"/>
    <property type="evidence" value="ECO:0007669"/>
    <property type="project" value="TreeGrafter"/>
</dbReference>
<dbReference type="GO" id="GO:0008840">
    <property type="term" value="F:4-hydroxy-tetrahydrodipicolinate synthase activity"/>
    <property type="evidence" value="ECO:0007669"/>
    <property type="project" value="UniProtKB-UniRule"/>
</dbReference>
<dbReference type="GO" id="GO:0019877">
    <property type="term" value="P:diaminopimelate biosynthetic process"/>
    <property type="evidence" value="ECO:0007669"/>
    <property type="project" value="UniProtKB-UniRule"/>
</dbReference>
<dbReference type="GO" id="GO:0009089">
    <property type="term" value="P:lysine biosynthetic process via diaminopimelate"/>
    <property type="evidence" value="ECO:0007669"/>
    <property type="project" value="UniProtKB-UniRule"/>
</dbReference>
<dbReference type="CDD" id="cd00950">
    <property type="entry name" value="DHDPS"/>
    <property type="match status" value="1"/>
</dbReference>
<dbReference type="Gene3D" id="3.20.20.70">
    <property type="entry name" value="Aldolase class I"/>
    <property type="match status" value="1"/>
</dbReference>
<dbReference type="HAMAP" id="MF_00418">
    <property type="entry name" value="DapA"/>
    <property type="match status" value="1"/>
</dbReference>
<dbReference type="InterPro" id="IPR013785">
    <property type="entry name" value="Aldolase_TIM"/>
</dbReference>
<dbReference type="InterPro" id="IPR005263">
    <property type="entry name" value="DapA"/>
</dbReference>
<dbReference type="InterPro" id="IPR002220">
    <property type="entry name" value="DapA-like"/>
</dbReference>
<dbReference type="InterPro" id="IPR020625">
    <property type="entry name" value="Schiff_base-form_aldolases_AS"/>
</dbReference>
<dbReference type="InterPro" id="IPR020624">
    <property type="entry name" value="Schiff_base-form_aldolases_CS"/>
</dbReference>
<dbReference type="NCBIfam" id="TIGR00674">
    <property type="entry name" value="dapA"/>
    <property type="match status" value="1"/>
</dbReference>
<dbReference type="PANTHER" id="PTHR12128:SF66">
    <property type="entry name" value="4-HYDROXY-2-OXOGLUTARATE ALDOLASE, MITOCHONDRIAL"/>
    <property type="match status" value="1"/>
</dbReference>
<dbReference type="PANTHER" id="PTHR12128">
    <property type="entry name" value="DIHYDRODIPICOLINATE SYNTHASE"/>
    <property type="match status" value="1"/>
</dbReference>
<dbReference type="Pfam" id="PF00701">
    <property type="entry name" value="DHDPS"/>
    <property type="match status" value="1"/>
</dbReference>
<dbReference type="PIRSF" id="PIRSF001365">
    <property type="entry name" value="DHDPS"/>
    <property type="match status" value="1"/>
</dbReference>
<dbReference type="PRINTS" id="PR00146">
    <property type="entry name" value="DHPICSNTHASE"/>
</dbReference>
<dbReference type="SMART" id="SM01130">
    <property type="entry name" value="DHDPS"/>
    <property type="match status" value="1"/>
</dbReference>
<dbReference type="SUPFAM" id="SSF51569">
    <property type="entry name" value="Aldolase"/>
    <property type="match status" value="1"/>
</dbReference>
<dbReference type="PROSITE" id="PS00665">
    <property type="entry name" value="DHDPS_1"/>
    <property type="match status" value="1"/>
</dbReference>
<dbReference type="PROSITE" id="PS00666">
    <property type="entry name" value="DHDPS_2"/>
    <property type="match status" value="1"/>
</dbReference>
<evidence type="ECO:0000255" key="1">
    <source>
        <dbReference type="HAMAP-Rule" id="MF_00418"/>
    </source>
</evidence>
<evidence type="ECO:0000305" key="2"/>
<organism>
    <name type="scientific">Microcystis aeruginosa (strain NIES-843 / IAM M-2473)</name>
    <dbReference type="NCBI Taxonomy" id="449447"/>
    <lineage>
        <taxon>Bacteria</taxon>
        <taxon>Bacillati</taxon>
        <taxon>Cyanobacteriota</taxon>
        <taxon>Cyanophyceae</taxon>
        <taxon>Oscillatoriophycideae</taxon>
        <taxon>Chroococcales</taxon>
        <taxon>Microcystaceae</taxon>
        <taxon>Microcystis</taxon>
    </lineage>
</organism>
<feature type="chain" id="PRO_0000340969" description="4-hydroxy-tetrahydrodipicolinate synthase">
    <location>
        <begin position="1"/>
        <end position="297"/>
    </location>
</feature>
<feature type="active site" description="Proton donor/acceptor" evidence="1">
    <location>
        <position position="139"/>
    </location>
</feature>
<feature type="active site" description="Schiff-base intermediate with substrate" evidence="1">
    <location>
        <position position="167"/>
    </location>
</feature>
<feature type="binding site" evidence="1">
    <location>
        <position position="50"/>
    </location>
    <ligand>
        <name>pyruvate</name>
        <dbReference type="ChEBI" id="CHEBI:15361"/>
    </ligand>
</feature>
<feature type="binding site" evidence="1">
    <location>
        <position position="209"/>
    </location>
    <ligand>
        <name>pyruvate</name>
        <dbReference type="ChEBI" id="CHEBI:15361"/>
    </ligand>
</feature>
<feature type="site" description="Part of a proton relay during catalysis" evidence="1">
    <location>
        <position position="49"/>
    </location>
</feature>
<feature type="site" description="Part of a proton relay during catalysis" evidence="1">
    <location>
        <position position="112"/>
    </location>
</feature>
<protein>
    <recommendedName>
        <fullName evidence="1">4-hydroxy-tetrahydrodipicolinate synthase</fullName>
        <shortName evidence="1">HTPA synthase</shortName>
        <ecNumber evidence="1">4.3.3.7</ecNumber>
    </recommendedName>
</protein>
<keyword id="KW-0028">Amino-acid biosynthesis</keyword>
<keyword id="KW-0963">Cytoplasm</keyword>
<keyword id="KW-0220">Diaminopimelate biosynthesis</keyword>
<keyword id="KW-0456">Lyase</keyword>
<keyword id="KW-0457">Lysine biosynthesis</keyword>
<keyword id="KW-0704">Schiff base</keyword>